<gene>
    <name type="primary">bin3</name>
</gene>
<organism>
    <name type="scientific">Xenopus laevis</name>
    <name type="common">African clawed frog</name>
    <dbReference type="NCBI Taxonomy" id="8355"/>
    <lineage>
        <taxon>Eukaryota</taxon>
        <taxon>Metazoa</taxon>
        <taxon>Chordata</taxon>
        <taxon>Craniata</taxon>
        <taxon>Vertebrata</taxon>
        <taxon>Euteleostomi</taxon>
        <taxon>Amphibia</taxon>
        <taxon>Batrachia</taxon>
        <taxon>Anura</taxon>
        <taxon>Pipoidea</taxon>
        <taxon>Pipidae</taxon>
        <taxon>Xenopodinae</taxon>
        <taxon>Xenopus</taxon>
        <taxon>Xenopus</taxon>
    </lineage>
</organism>
<keyword id="KW-0131">Cell cycle</keyword>
<keyword id="KW-0132">Cell division</keyword>
<keyword id="KW-0175">Coiled coil</keyword>
<keyword id="KW-0963">Cytoplasm</keyword>
<keyword id="KW-0206">Cytoskeleton</keyword>
<keyword id="KW-1185">Reference proteome</keyword>
<keyword id="KW-0717">Septation</keyword>
<evidence type="ECO:0000250" key="1"/>
<evidence type="ECO:0000255" key="2"/>
<evidence type="ECO:0000255" key="3">
    <source>
        <dbReference type="PROSITE-ProRule" id="PRU00361"/>
    </source>
</evidence>
<accession>Q5PPZ5</accession>
<name>BIN3_XENLA</name>
<comment type="function">
    <text evidence="1">Involved in cytokinesis and septation where it has a role in the localization of F-actin.</text>
</comment>
<comment type="subcellular location">
    <subcellularLocation>
        <location evidence="1">Cytoplasm</location>
        <location evidence="1">Cytoskeleton</location>
    </subcellularLocation>
</comment>
<dbReference type="EMBL" id="BC087428">
    <property type="protein sequence ID" value="AAH87428.1"/>
    <property type="molecule type" value="mRNA"/>
</dbReference>
<dbReference type="RefSeq" id="NP_001088770.1">
    <property type="nucleotide sequence ID" value="NM_001095301.1"/>
</dbReference>
<dbReference type="SMR" id="Q5PPZ5"/>
<dbReference type="DNASU" id="496034"/>
<dbReference type="GeneID" id="496034"/>
<dbReference type="KEGG" id="xla:496034"/>
<dbReference type="AGR" id="Xenbase:XB-GENE-999572"/>
<dbReference type="CTD" id="496034"/>
<dbReference type="Xenbase" id="XB-GENE-999572">
    <property type="gene designation" value="bin3.L"/>
</dbReference>
<dbReference type="OrthoDB" id="446293at2759"/>
<dbReference type="Proteomes" id="UP000186698">
    <property type="component" value="Chromosome 3L"/>
</dbReference>
<dbReference type="Bgee" id="496034">
    <property type="expression patterns" value="Expressed in testis and 19 other cell types or tissues"/>
</dbReference>
<dbReference type="GO" id="GO:0015629">
    <property type="term" value="C:actin cytoskeleton"/>
    <property type="evidence" value="ECO:0000318"/>
    <property type="project" value="GO_Central"/>
</dbReference>
<dbReference type="GO" id="GO:0005737">
    <property type="term" value="C:cytoplasm"/>
    <property type="evidence" value="ECO:0007669"/>
    <property type="project" value="UniProtKB-KW"/>
</dbReference>
<dbReference type="GO" id="GO:0008289">
    <property type="term" value="F:lipid binding"/>
    <property type="evidence" value="ECO:0007669"/>
    <property type="project" value="TreeGrafter"/>
</dbReference>
<dbReference type="GO" id="GO:0051666">
    <property type="term" value="P:actin cortical patch localization"/>
    <property type="evidence" value="ECO:0000318"/>
    <property type="project" value="GO_Central"/>
</dbReference>
<dbReference type="GO" id="GO:0051301">
    <property type="term" value="P:cell division"/>
    <property type="evidence" value="ECO:0007669"/>
    <property type="project" value="UniProtKB-KW"/>
</dbReference>
<dbReference type="GO" id="GO:0006897">
    <property type="term" value="P:endocytosis"/>
    <property type="evidence" value="ECO:0000318"/>
    <property type="project" value="GO_Central"/>
</dbReference>
<dbReference type="GO" id="GO:0097320">
    <property type="term" value="P:plasma membrane tubulation"/>
    <property type="evidence" value="ECO:0000318"/>
    <property type="project" value="GO_Central"/>
</dbReference>
<dbReference type="CDD" id="cd07590">
    <property type="entry name" value="BAR_Bin3"/>
    <property type="match status" value="1"/>
</dbReference>
<dbReference type="FunFam" id="1.20.1270.60:FF:000028">
    <property type="entry name" value="Bridging integrator 3 homolog"/>
    <property type="match status" value="1"/>
</dbReference>
<dbReference type="Gene3D" id="1.20.1270.60">
    <property type="entry name" value="Arfaptin homology (AH) domain/BAR domain"/>
    <property type="match status" value="1"/>
</dbReference>
<dbReference type="InterPro" id="IPR027267">
    <property type="entry name" value="AH/BAR_dom_sf"/>
</dbReference>
<dbReference type="InterPro" id="IPR004148">
    <property type="entry name" value="BAR_dom"/>
</dbReference>
<dbReference type="InterPro" id="IPR046982">
    <property type="entry name" value="BIN3/RVS161-like"/>
</dbReference>
<dbReference type="InterPro" id="IPR037428">
    <property type="entry name" value="Bin3_BAR"/>
</dbReference>
<dbReference type="PANTHER" id="PTHR47174">
    <property type="entry name" value="BRIDGING INTEGRATOR 3"/>
    <property type="match status" value="1"/>
</dbReference>
<dbReference type="PANTHER" id="PTHR47174:SF3">
    <property type="entry name" value="BRIDGING INTEGRATOR 3"/>
    <property type="match status" value="1"/>
</dbReference>
<dbReference type="Pfam" id="PF03114">
    <property type="entry name" value="BAR"/>
    <property type="match status" value="1"/>
</dbReference>
<dbReference type="SMART" id="SM00721">
    <property type="entry name" value="BAR"/>
    <property type="match status" value="1"/>
</dbReference>
<dbReference type="SUPFAM" id="SSF103657">
    <property type="entry name" value="BAR/IMD domain-like"/>
    <property type="match status" value="1"/>
</dbReference>
<dbReference type="PROSITE" id="PS51021">
    <property type="entry name" value="BAR"/>
    <property type="match status" value="1"/>
</dbReference>
<sequence length="252" mass="29383">MSWNLFKGGPKKQIVPKTVERDFEREYGKLQQLEDQIKKLQKDMKKSIEADLAMSKSAVRISSDLLGNPLCEPDVDFLQMVTALDTAMKRMDAFNQEKVNQIQKTVMDPLKRYSSVFPSLNMAVKRREQALQDYKRLQTKVEKYEEKDKTGAMIAKLHQAREELRPVRDDFEAKNHQLLDEMPKFYNSRTDFFKPSFQSLIRAQVVYYTEMSRVFGDLAQQVDEVQLSDAEREQENEARLAELRSLSIVADD</sequence>
<proteinExistence type="evidence at transcript level"/>
<feature type="chain" id="PRO_0000192958" description="Bridging integrator 3 homolog">
    <location>
        <begin position="1"/>
        <end position="252"/>
    </location>
</feature>
<feature type="domain" description="BAR" evidence="3">
    <location>
        <begin position="8"/>
        <end position="231"/>
    </location>
</feature>
<feature type="coiled-coil region" evidence="2">
    <location>
        <begin position="17"/>
        <end position="57"/>
    </location>
</feature>
<feature type="coiled-coil region" evidence="2">
    <location>
        <begin position="119"/>
        <end position="150"/>
    </location>
</feature>
<feature type="coiled-coil region" evidence="2">
    <location>
        <begin position="224"/>
        <end position="244"/>
    </location>
</feature>
<protein>
    <recommendedName>
        <fullName>Bridging integrator 3 homolog</fullName>
    </recommendedName>
</protein>
<reference key="1">
    <citation type="submission" date="2004-12" db="EMBL/GenBank/DDBJ databases">
        <authorList>
            <consortium name="NIH - Xenopus Gene Collection (XGC) project"/>
        </authorList>
    </citation>
    <scope>NUCLEOTIDE SEQUENCE [LARGE SCALE MRNA]</scope>
    <source>
        <tissue>Testis</tissue>
    </source>
</reference>